<gene>
    <name type="primary">Ddit3</name>
    <name type="synonym">Chop</name>
    <name type="synonym">Chop10</name>
    <name type="synonym">Gadd153</name>
</gene>
<protein>
    <recommendedName>
        <fullName>DNA damage-inducible transcript 3 protein</fullName>
        <shortName>DDIT-3</shortName>
    </recommendedName>
    <alternativeName>
        <fullName>C/EBP zeta</fullName>
    </alternativeName>
    <alternativeName>
        <fullName>C/EBP-homologous protein</fullName>
        <shortName>CHOP</shortName>
    </alternativeName>
    <alternativeName>
        <fullName>C/EBP-homologous protein 10</fullName>
        <shortName>CHOP-10</shortName>
    </alternativeName>
    <alternativeName>
        <fullName>CCAAT/enhancer-binding protein homologous protein</fullName>
    </alternativeName>
    <alternativeName>
        <fullName>Growth arrest and DNA-damage-inducible protein GADD153</fullName>
    </alternativeName>
</protein>
<accession>Q62857</accession>
<evidence type="ECO:0000250" key="1"/>
<evidence type="ECO:0000250" key="2">
    <source>
        <dbReference type="UniProtKB" id="P35639"/>
    </source>
</evidence>
<evidence type="ECO:0000255" key="3">
    <source>
        <dbReference type="PROSITE-ProRule" id="PRU00978"/>
    </source>
</evidence>
<evidence type="ECO:0000256" key="4">
    <source>
        <dbReference type="SAM" id="MobiDB-lite"/>
    </source>
</evidence>
<evidence type="ECO:0000305" key="5"/>
<reference key="1">
    <citation type="submission" date="1995-09" db="EMBL/GenBank/DDBJ databases">
        <authorList>
            <person name="Jin K.L."/>
            <person name="Chen J."/>
            <person name="Simon R.P."/>
            <person name="Graham S.H."/>
        </authorList>
    </citation>
    <scope>NUCLEOTIDE SEQUENCE [MRNA]</scope>
    <source>
        <strain>Sprague-Dawley</strain>
        <tissue>Brain</tissue>
    </source>
</reference>
<proteinExistence type="evidence at transcript level"/>
<dbReference type="EMBL" id="U36994">
    <property type="protein sequence ID" value="AAA87944.1"/>
    <property type="molecule type" value="mRNA"/>
</dbReference>
<dbReference type="SMR" id="Q62857"/>
<dbReference type="ComplexPortal" id="CPX-60">
    <property type="entry name" value="bZIP transcription factor complex, Cebpa-Ddit3"/>
</dbReference>
<dbReference type="ComplexPortal" id="CPX-62">
    <property type="entry name" value="bZIP transcription factor complex, Cebpb-Ddit3"/>
</dbReference>
<dbReference type="FunCoup" id="Q62857">
    <property type="interactions" value="349"/>
</dbReference>
<dbReference type="IntAct" id="Q62857">
    <property type="interactions" value="3"/>
</dbReference>
<dbReference type="STRING" id="10116.ENSRNOP00000071840"/>
<dbReference type="ChEMBL" id="CHEMBL3797018"/>
<dbReference type="PhosphoSitePlus" id="Q62857"/>
<dbReference type="PaxDb" id="10116-ENSRNOP00000008941"/>
<dbReference type="UCSC" id="RGD:62391">
    <property type="organism name" value="rat"/>
</dbReference>
<dbReference type="AGR" id="RGD:62391"/>
<dbReference type="RGD" id="62391">
    <property type="gene designation" value="Ddit3"/>
</dbReference>
<dbReference type="eggNOG" id="KOG3119">
    <property type="taxonomic scope" value="Eukaryota"/>
</dbReference>
<dbReference type="InParanoid" id="Q62857"/>
<dbReference type="PhylomeDB" id="Q62857"/>
<dbReference type="PRO" id="PR:Q62857"/>
<dbReference type="Proteomes" id="UP000002494">
    <property type="component" value="Unplaced"/>
</dbReference>
<dbReference type="GO" id="GO:1990622">
    <property type="term" value="C:CHOP-ATF3 complex"/>
    <property type="evidence" value="ECO:0000266"/>
    <property type="project" value="RGD"/>
</dbReference>
<dbReference type="GO" id="GO:1990617">
    <property type="term" value="C:CHOP-ATF4 complex"/>
    <property type="evidence" value="ECO:0000266"/>
    <property type="project" value="RGD"/>
</dbReference>
<dbReference type="GO" id="GO:0036488">
    <property type="term" value="C:CHOP-C/EBP complex"/>
    <property type="evidence" value="ECO:0000353"/>
    <property type="project" value="ParkinsonsUK-UCL"/>
</dbReference>
<dbReference type="GO" id="GO:0005737">
    <property type="term" value="C:cytoplasm"/>
    <property type="evidence" value="ECO:0000266"/>
    <property type="project" value="RGD"/>
</dbReference>
<dbReference type="GO" id="GO:0005770">
    <property type="term" value="C:late endosome"/>
    <property type="evidence" value="ECO:0000266"/>
    <property type="project" value="RGD"/>
</dbReference>
<dbReference type="GO" id="GO:0005654">
    <property type="term" value="C:nucleoplasm"/>
    <property type="evidence" value="ECO:0000304"/>
    <property type="project" value="Reactome"/>
</dbReference>
<dbReference type="GO" id="GO:0005634">
    <property type="term" value="C:nucleus"/>
    <property type="evidence" value="ECO:0000314"/>
    <property type="project" value="ParkinsonsUK-UCL"/>
</dbReference>
<dbReference type="GO" id="GO:0032993">
    <property type="term" value="C:protein-DNA complex"/>
    <property type="evidence" value="ECO:0000266"/>
    <property type="project" value="RGD"/>
</dbReference>
<dbReference type="GO" id="GO:0090575">
    <property type="term" value="C:RNA polymerase II transcription regulator complex"/>
    <property type="evidence" value="ECO:0000266"/>
    <property type="project" value="RGD"/>
</dbReference>
<dbReference type="GO" id="GO:0008140">
    <property type="term" value="F:cAMP response element binding protein binding"/>
    <property type="evidence" value="ECO:0000250"/>
    <property type="project" value="UniProtKB"/>
</dbReference>
<dbReference type="GO" id="GO:0003677">
    <property type="term" value="F:DNA binding"/>
    <property type="evidence" value="ECO:0000250"/>
    <property type="project" value="UniProtKB"/>
</dbReference>
<dbReference type="GO" id="GO:0001228">
    <property type="term" value="F:DNA-binding transcription activator activity, RNA polymerase II-specific"/>
    <property type="evidence" value="ECO:0000266"/>
    <property type="project" value="RGD"/>
</dbReference>
<dbReference type="GO" id="GO:0003700">
    <property type="term" value="F:DNA-binding transcription factor activity"/>
    <property type="evidence" value="ECO:0000314"/>
    <property type="project" value="RGD"/>
</dbReference>
<dbReference type="GO" id="GO:0042802">
    <property type="term" value="F:identical protein binding"/>
    <property type="evidence" value="ECO:0000266"/>
    <property type="project" value="RGD"/>
</dbReference>
<dbReference type="GO" id="GO:0043522">
    <property type="term" value="F:leucine zipper domain binding"/>
    <property type="evidence" value="ECO:0000266"/>
    <property type="project" value="RGD"/>
</dbReference>
<dbReference type="GO" id="GO:0046982">
    <property type="term" value="F:protein heterodimerization activity"/>
    <property type="evidence" value="ECO:0000353"/>
    <property type="project" value="ParkinsonsUK-UCL"/>
</dbReference>
<dbReference type="GO" id="GO:0042803">
    <property type="term" value="F:protein homodimerization activity"/>
    <property type="evidence" value="ECO:0000266"/>
    <property type="project" value="RGD"/>
</dbReference>
<dbReference type="GO" id="GO:0000978">
    <property type="term" value="F:RNA polymerase II cis-regulatory region sequence-specific DNA binding"/>
    <property type="evidence" value="ECO:0000266"/>
    <property type="project" value="RGD"/>
</dbReference>
<dbReference type="GO" id="GO:0061629">
    <property type="term" value="F:RNA polymerase II-specific DNA-binding transcription factor binding"/>
    <property type="evidence" value="ECO:0000266"/>
    <property type="project" value="RGD"/>
</dbReference>
<dbReference type="GO" id="GO:0000976">
    <property type="term" value="F:transcription cis-regulatory region binding"/>
    <property type="evidence" value="ECO:0000266"/>
    <property type="project" value="RGD"/>
</dbReference>
<dbReference type="GO" id="GO:0003714">
    <property type="term" value="F:transcription corepressor activity"/>
    <property type="evidence" value="ECO:0000266"/>
    <property type="project" value="RGD"/>
</dbReference>
<dbReference type="GO" id="GO:0140537">
    <property type="term" value="F:transcription regulator activator activity"/>
    <property type="evidence" value="ECO:0000266"/>
    <property type="project" value="RGD"/>
</dbReference>
<dbReference type="GO" id="GO:0140416">
    <property type="term" value="F:transcription regulator inhibitor activity"/>
    <property type="evidence" value="ECO:0000266"/>
    <property type="project" value="RGD"/>
</dbReference>
<dbReference type="GO" id="GO:0009948">
    <property type="term" value="P:anterior/posterior axis specification"/>
    <property type="evidence" value="ECO:0000266"/>
    <property type="project" value="RGD"/>
</dbReference>
<dbReference type="GO" id="GO:0006915">
    <property type="term" value="P:apoptotic process"/>
    <property type="evidence" value="ECO:0000250"/>
    <property type="project" value="UniProtKB"/>
</dbReference>
<dbReference type="GO" id="GO:0060840">
    <property type="term" value="P:artery development"/>
    <property type="evidence" value="ECO:0000266"/>
    <property type="project" value="RGD"/>
</dbReference>
<dbReference type="GO" id="GO:0001955">
    <property type="term" value="P:blood vessel maturation"/>
    <property type="evidence" value="ECO:0000250"/>
    <property type="project" value="UniProtKB"/>
</dbReference>
<dbReference type="GO" id="GO:0045454">
    <property type="term" value="P:cell redox homeostasis"/>
    <property type="evidence" value="ECO:0000266"/>
    <property type="project" value="RGD"/>
</dbReference>
<dbReference type="GO" id="GO:0071287">
    <property type="term" value="P:cellular response to manganese ion"/>
    <property type="evidence" value="ECO:0000270"/>
    <property type="project" value="ParkinsonsUK-UCL"/>
</dbReference>
<dbReference type="GO" id="GO:0048568">
    <property type="term" value="P:embryonic organ development"/>
    <property type="evidence" value="ECO:0000270"/>
    <property type="project" value="RGD"/>
</dbReference>
<dbReference type="GO" id="GO:0030968">
    <property type="term" value="P:endoplasmic reticulum unfolded protein response"/>
    <property type="evidence" value="ECO:0000250"/>
    <property type="project" value="UniProtKB"/>
</dbReference>
<dbReference type="GO" id="GO:0006983">
    <property type="term" value="P:ER overload response"/>
    <property type="evidence" value="ECO:0000315"/>
    <property type="project" value="RGD"/>
</dbReference>
<dbReference type="GO" id="GO:0072655">
    <property type="term" value="P:establishment of protein localization to mitochondrion"/>
    <property type="evidence" value="ECO:0000266"/>
    <property type="project" value="RGD"/>
</dbReference>
<dbReference type="GO" id="GO:0010467">
    <property type="term" value="P:gene expression"/>
    <property type="evidence" value="ECO:0000266"/>
    <property type="project" value="RGD"/>
</dbReference>
<dbReference type="GO" id="GO:0140468">
    <property type="term" value="P:HRI-mediated signaling"/>
    <property type="evidence" value="ECO:0000266"/>
    <property type="project" value="RGD"/>
</dbReference>
<dbReference type="GO" id="GO:0140467">
    <property type="term" value="P:integrated stress response signaling"/>
    <property type="evidence" value="ECO:0000266"/>
    <property type="project" value="RGD"/>
</dbReference>
<dbReference type="GO" id="GO:0070059">
    <property type="term" value="P:intrinsic apoptotic signaling pathway in response to endoplasmic reticulum stress"/>
    <property type="evidence" value="ECO:0000250"/>
    <property type="project" value="UniProtKB"/>
</dbReference>
<dbReference type="GO" id="GO:1990442">
    <property type="term" value="P:intrinsic apoptotic signaling pathway in response to nitrosative stress"/>
    <property type="evidence" value="ECO:0000266"/>
    <property type="project" value="RGD"/>
</dbReference>
<dbReference type="GO" id="GO:0001554">
    <property type="term" value="P:luteolysis"/>
    <property type="evidence" value="ECO:0000270"/>
    <property type="project" value="RGD"/>
</dbReference>
<dbReference type="GO" id="GO:0090090">
    <property type="term" value="P:negative regulation of canonical Wnt signaling pathway"/>
    <property type="evidence" value="ECO:0000266"/>
    <property type="project" value="RGD"/>
</dbReference>
<dbReference type="GO" id="GO:0120163">
    <property type="term" value="P:negative regulation of cold-induced thermogenesis"/>
    <property type="evidence" value="ECO:0000250"/>
    <property type="project" value="YuBioLab"/>
</dbReference>
<dbReference type="GO" id="GO:2000016">
    <property type="term" value="P:negative regulation of determination of dorsal identity"/>
    <property type="evidence" value="ECO:0000266"/>
    <property type="project" value="RGD"/>
</dbReference>
<dbReference type="GO" id="GO:0045892">
    <property type="term" value="P:negative regulation of DNA-templated transcription"/>
    <property type="evidence" value="ECO:0000250"/>
    <property type="project" value="UniProtKB"/>
</dbReference>
<dbReference type="GO" id="GO:0045599">
    <property type="term" value="P:negative regulation of fat cell differentiation"/>
    <property type="evidence" value="ECO:0000266"/>
    <property type="project" value="RGD"/>
</dbReference>
<dbReference type="GO" id="GO:0032700">
    <property type="term" value="P:negative regulation of interleukin-17 production"/>
    <property type="evidence" value="ECO:0000266"/>
    <property type="project" value="RGD"/>
</dbReference>
<dbReference type="GO" id="GO:0032713">
    <property type="term" value="P:negative regulation of interleukin-4 production"/>
    <property type="evidence" value="ECO:0000266"/>
    <property type="project" value="RGD"/>
</dbReference>
<dbReference type="GO" id="GO:0045662">
    <property type="term" value="P:negative regulation of myoblast differentiation"/>
    <property type="evidence" value="ECO:0000250"/>
    <property type="project" value="UniProtKB"/>
</dbReference>
<dbReference type="GO" id="GO:0051898">
    <property type="term" value="P:negative regulation of phosphatidylinositol 3-kinase/protein kinase B signal transduction"/>
    <property type="evidence" value="ECO:0000266"/>
    <property type="project" value="RGD"/>
</dbReference>
<dbReference type="GO" id="GO:0000122">
    <property type="term" value="P:negative regulation of transcription by RNA polymerase II"/>
    <property type="evidence" value="ECO:0000314"/>
    <property type="project" value="ParkinsonsUK-UCL"/>
</dbReference>
<dbReference type="GO" id="GO:0032689">
    <property type="term" value="P:negative regulation of type II interferon production"/>
    <property type="evidence" value="ECO:0000266"/>
    <property type="project" value="RGD"/>
</dbReference>
<dbReference type="GO" id="GO:0043065">
    <property type="term" value="P:positive regulation of apoptotic process"/>
    <property type="evidence" value="ECO:0000315"/>
    <property type="project" value="RGD"/>
</dbReference>
<dbReference type="GO" id="GO:0034263">
    <property type="term" value="P:positive regulation of autophagy in response to ER overload"/>
    <property type="evidence" value="ECO:0000315"/>
    <property type="project" value="RGD"/>
</dbReference>
<dbReference type="GO" id="GO:0045893">
    <property type="term" value="P:positive regulation of DNA-templated transcription"/>
    <property type="evidence" value="ECO:0000314"/>
    <property type="project" value="RGD"/>
</dbReference>
<dbReference type="GO" id="GO:1902237">
    <property type="term" value="P:positive regulation of endoplasmic reticulum stress-induced intrinsic apoptotic signaling pathway"/>
    <property type="evidence" value="ECO:0000266"/>
    <property type="project" value="RGD"/>
</dbReference>
<dbReference type="GO" id="GO:0032757">
    <property type="term" value="P:positive regulation of interleukin-8 production"/>
    <property type="evidence" value="ECO:0000250"/>
    <property type="project" value="UniProtKB"/>
</dbReference>
<dbReference type="GO" id="GO:2001244">
    <property type="term" value="P:positive regulation of intrinsic apoptotic signaling pathway"/>
    <property type="evidence" value="ECO:0000250"/>
    <property type="project" value="UniProtKB"/>
</dbReference>
<dbReference type="GO" id="GO:0043525">
    <property type="term" value="P:positive regulation of neuron apoptotic process"/>
    <property type="evidence" value="ECO:0000315"/>
    <property type="project" value="UniProtKB"/>
</dbReference>
<dbReference type="GO" id="GO:0045944">
    <property type="term" value="P:positive regulation of transcription by RNA polymerase II"/>
    <property type="evidence" value="ECO:0000314"/>
    <property type="project" value="ParkinsonsUK-UCL"/>
</dbReference>
<dbReference type="GO" id="GO:0043161">
    <property type="term" value="P:proteasome-mediated ubiquitin-dependent protein catabolic process"/>
    <property type="evidence" value="ECO:0000250"/>
    <property type="project" value="UniProtKB"/>
</dbReference>
<dbReference type="GO" id="GO:0010506">
    <property type="term" value="P:regulation of autophagy"/>
    <property type="evidence" value="ECO:0000315"/>
    <property type="project" value="UniProtKB"/>
</dbReference>
<dbReference type="GO" id="GO:0051726">
    <property type="term" value="P:regulation of cell cycle"/>
    <property type="evidence" value="ECO:0007669"/>
    <property type="project" value="UniProtKB-KW"/>
</dbReference>
<dbReference type="GO" id="GO:0006355">
    <property type="term" value="P:regulation of DNA-templated transcription"/>
    <property type="evidence" value="ECO:0000314"/>
    <property type="project" value="RGD"/>
</dbReference>
<dbReference type="GO" id="GO:0006357">
    <property type="term" value="P:regulation of transcription by RNA polymerase II"/>
    <property type="evidence" value="ECO:0000266"/>
    <property type="project" value="RGD"/>
</dbReference>
<dbReference type="GO" id="GO:0051209">
    <property type="term" value="P:release of sequestered calcium ion into cytosol"/>
    <property type="evidence" value="ECO:0000250"/>
    <property type="project" value="UniProtKB"/>
</dbReference>
<dbReference type="GO" id="GO:0001975">
    <property type="term" value="P:response to amphetamine"/>
    <property type="evidence" value="ECO:0000270"/>
    <property type="project" value="RGD"/>
</dbReference>
<dbReference type="GO" id="GO:0034976">
    <property type="term" value="P:response to endoplasmic reticulum stress"/>
    <property type="evidence" value="ECO:0000314"/>
    <property type="project" value="ParkinsonsUK-UCL"/>
</dbReference>
<dbReference type="GO" id="GO:0042542">
    <property type="term" value="P:response to hydrogen peroxide"/>
    <property type="evidence" value="ECO:0000270"/>
    <property type="project" value="RGD"/>
</dbReference>
<dbReference type="GO" id="GO:1904373">
    <property type="term" value="P:response to kainic acid"/>
    <property type="evidence" value="ECO:0000270"/>
    <property type="project" value="RGD"/>
</dbReference>
<dbReference type="GO" id="GO:0007584">
    <property type="term" value="P:response to nutrient"/>
    <property type="evidence" value="ECO:0000270"/>
    <property type="project" value="RGD"/>
</dbReference>
<dbReference type="GO" id="GO:0006979">
    <property type="term" value="P:response to oxidative stress"/>
    <property type="evidence" value="ECO:0000270"/>
    <property type="project" value="RGD"/>
</dbReference>
<dbReference type="GO" id="GO:0036119">
    <property type="term" value="P:response to platelet-derived growth factor"/>
    <property type="evidence" value="ECO:0000266"/>
    <property type="project" value="RGD"/>
</dbReference>
<dbReference type="GO" id="GO:0042594">
    <property type="term" value="P:response to starvation"/>
    <property type="evidence" value="ECO:0000250"/>
    <property type="project" value="UniProtKB"/>
</dbReference>
<dbReference type="GO" id="GO:0009636">
    <property type="term" value="P:response to toxic substance"/>
    <property type="evidence" value="ECO:0000270"/>
    <property type="project" value="RGD"/>
</dbReference>
<dbReference type="GO" id="GO:0006986">
    <property type="term" value="P:response to unfolded protein"/>
    <property type="evidence" value="ECO:0000250"/>
    <property type="project" value="UniProtKB"/>
</dbReference>
<dbReference type="GO" id="GO:0009611">
    <property type="term" value="P:response to wounding"/>
    <property type="evidence" value="ECO:0000266"/>
    <property type="project" value="RGD"/>
</dbReference>
<dbReference type="GO" id="GO:0009410">
    <property type="term" value="P:response to xenobiotic stimulus"/>
    <property type="evidence" value="ECO:0000270"/>
    <property type="project" value="RGD"/>
</dbReference>
<dbReference type="GO" id="GO:0007605">
    <property type="term" value="P:sensory perception of sound"/>
    <property type="evidence" value="ECO:0000266"/>
    <property type="project" value="RGD"/>
</dbReference>
<dbReference type="GO" id="GO:1904738">
    <property type="term" value="P:vascular associated smooth muscle cell migration"/>
    <property type="evidence" value="ECO:0000266"/>
    <property type="project" value="RGD"/>
</dbReference>
<dbReference type="GO" id="GO:1990874">
    <property type="term" value="P:vascular associated smooth muscle cell proliferation"/>
    <property type="evidence" value="ECO:0000266"/>
    <property type="project" value="RGD"/>
</dbReference>
<dbReference type="GO" id="GO:0016055">
    <property type="term" value="P:Wnt signaling pathway"/>
    <property type="evidence" value="ECO:0007669"/>
    <property type="project" value="UniProtKB-KW"/>
</dbReference>
<dbReference type="FunFam" id="1.20.5.170:FF:000066">
    <property type="entry name" value="DNA damage-inducible transcript 3 protein"/>
    <property type="match status" value="1"/>
</dbReference>
<dbReference type="Gene3D" id="1.20.5.170">
    <property type="match status" value="1"/>
</dbReference>
<dbReference type="InterPro" id="IPR004827">
    <property type="entry name" value="bZIP"/>
</dbReference>
<dbReference type="InterPro" id="IPR046347">
    <property type="entry name" value="bZIP_sf"/>
</dbReference>
<dbReference type="InterPro" id="IPR016670">
    <property type="entry name" value="DNA_damage_induc_transcript_3"/>
</dbReference>
<dbReference type="PANTHER" id="PTHR16833">
    <property type="entry name" value="DNA DAMAGE-INDUCIBLE TRANSCRIPT 3 DDIT3"/>
    <property type="match status" value="1"/>
</dbReference>
<dbReference type="PANTHER" id="PTHR16833:SF0">
    <property type="entry name" value="DNA DAMAGE-INDUCIBLE TRANSCRIPT 3 PROTEIN"/>
    <property type="match status" value="1"/>
</dbReference>
<dbReference type="PIRSF" id="PIRSF016571">
    <property type="entry name" value="C/EBPzeta_CHOP_DDIT3"/>
    <property type="match status" value="1"/>
</dbReference>
<dbReference type="SMART" id="SM00338">
    <property type="entry name" value="BRLZ"/>
    <property type="match status" value="1"/>
</dbReference>
<dbReference type="SUPFAM" id="SSF57959">
    <property type="entry name" value="Leucine zipper domain"/>
    <property type="match status" value="1"/>
</dbReference>
<dbReference type="PROSITE" id="PS50217">
    <property type="entry name" value="BZIP"/>
    <property type="match status" value="1"/>
</dbReference>
<name>DDIT3_RAT</name>
<keyword id="KW-0010">Activator</keyword>
<keyword id="KW-0053">Apoptosis</keyword>
<keyword id="KW-0131">Cell cycle</keyword>
<keyword id="KW-0963">Cytoplasm</keyword>
<keyword id="KW-0238">DNA-binding</keyword>
<keyword id="KW-0338">Growth arrest</keyword>
<keyword id="KW-0539">Nucleus</keyword>
<keyword id="KW-0597">Phosphoprotein</keyword>
<keyword id="KW-1185">Reference proteome</keyword>
<keyword id="KW-0678">Repressor</keyword>
<keyword id="KW-0346">Stress response</keyword>
<keyword id="KW-0804">Transcription</keyword>
<keyword id="KW-0805">Transcription regulation</keyword>
<keyword id="KW-0832">Ubl conjugation</keyword>
<keyword id="KW-0834">Unfolded protein response</keyword>
<keyword id="KW-0879">Wnt signaling pathway</keyword>
<comment type="function">
    <text evidence="1">Multifunctional transcription factor in ER stress response. Plays an essential role in the response to a wide variety of cell stresses and induces cell cycle arrest and apoptosis in response to ER stress. Plays a dual role both as an inhibitor of CCAAT/enhancer-binding protein (C/EBP) function and as an activator of other genes. Acts as a dominant-negative regulator of C/EBP-induced transcription: dimerizes with members of the C/EBP family, impairs their association with C/EBP binding sites in the promoter regions, and inhibits the expression of C/EBP regulated genes. Positively regulates the transcription of TRIB3, IL6, IL8, IL23, TNFRSF10B/DR5, PPP1R15A/GADD34, BBC3/PUMA, BCL2L11/BIM and ERO1L. Negatively regulates; expression of BCL2 and MYOD1, ATF4-dependent transcriptional activation of asparagine synthetase (ASNS), CEBPA-dependent transcriptional activation of hepcidin (HAMP) and CEBPB-mediated expression of peroxisome proliferator-activated receptor gamma (PPARG). Inhibits the canonical Wnt signaling pathway by binding to TCF7L2/TCF4, impairing its DNA-binding properties and repressing its transcriptional activity. Plays a regulatory role in the inflammatory response through the induction of caspase-11 (CASP4/CASP11) which induces the activation of caspase-1 (CASP1) and both these caspases increase the activation of pro-IL1B to mature IL1B which is involved in the inflammatory response. Acts as a major regulator of postnatal neovascularization through regulation of endothelial nitric oxide synthase (NOS3)-related signaling (By similarity).</text>
</comment>
<comment type="subunit">
    <text evidence="1">Heterodimer (By similarity). Interacts with TCF7L2/TCF4, EP300/P300, HDAC1, HDAC5 and HDAC6. Interacts with TRIB3 which blocks its association with EP300/P300. Interacts with FOXO3, CEBPB and ATF4 (By similarity).</text>
</comment>
<comment type="subcellular location">
    <subcellularLocation>
        <location evidence="1">Cytoplasm</location>
    </subcellularLocation>
    <subcellularLocation>
        <location evidence="3">Nucleus</location>
    </subcellularLocation>
    <text evidence="1">Present in the cytoplasm under non-stressed conditions and ER stress leads to its nuclear accumulation.</text>
</comment>
<comment type="domain">
    <text evidence="1">The N-terminal region is necessary for its proteasomal degradation, transcriptional activity and interaction with EP300/P300.</text>
</comment>
<comment type="PTM">
    <text evidence="1">Ubiquitinated, leading to its degradation by the proteasome.</text>
</comment>
<comment type="PTM">
    <text evidence="1">Phosphorylation at serine residues by MAPK14 enhances its transcriptional activation activity while phosphorylation at serine residues by CK2 inhibits its transcriptional activation activity.</text>
</comment>
<comment type="similarity">
    <text evidence="5">Belongs to the bZIP family.</text>
</comment>
<feature type="chain" id="PRO_0000076644" description="DNA damage-inducible transcript 3 protein">
    <location>
        <begin position="1"/>
        <end position="168"/>
    </location>
</feature>
<feature type="domain" description="bZIP" evidence="3">
    <location>
        <begin position="98"/>
        <end position="161"/>
    </location>
</feature>
<feature type="region of interest" description="N-terminal" evidence="1">
    <location>
        <begin position="10"/>
        <end position="26"/>
    </location>
</feature>
<feature type="region of interest" description="Interaction with TRIB3" evidence="1">
    <location>
        <begin position="10"/>
        <end position="18"/>
    </location>
</feature>
<feature type="region of interest" description="Disordered" evidence="4">
    <location>
        <begin position="34"/>
        <end position="130"/>
    </location>
</feature>
<feature type="region of interest" description="Basic motif" evidence="3">
    <location>
        <begin position="100"/>
        <end position="129"/>
    </location>
</feature>
<feature type="region of interest" description="Leucine-zipper" evidence="3">
    <location>
        <begin position="133"/>
        <end position="147"/>
    </location>
</feature>
<feature type="compositionally biased region" description="Low complexity" evidence="4">
    <location>
        <begin position="73"/>
        <end position="88"/>
    </location>
</feature>
<feature type="compositionally biased region" description="Basic and acidic residues" evidence="4">
    <location>
        <begin position="118"/>
        <end position="130"/>
    </location>
</feature>
<feature type="modified residue" description="Phosphoserine; by CK2" evidence="2">
    <location>
        <position position="14"/>
    </location>
</feature>
<feature type="modified residue" description="Phosphoserine; by CK2" evidence="2">
    <location>
        <position position="15"/>
    </location>
</feature>
<feature type="modified residue" description="Phosphoserine; by CK2" evidence="2">
    <location>
        <position position="30"/>
    </location>
</feature>
<feature type="modified residue" description="Phosphoserine; by CK2" evidence="2">
    <location>
        <position position="31"/>
    </location>
</feature>
<feature type="modified residue" description="Phosphoserine; by MAPK14" evidence="2">
    <location>
        <position position="78"/>
    </location>
</feature>
<feature type="modified residue" description="Phosphoserine; by MAPK14" evidence="2">
    <location>
        <position position="81"/>
    </location>
</feature>
<organism>
    <name type="scientific">Rattus norvegicus</name>
    <name type="common">Rat</name>
    <dbReference type="NCBI Taxonomy" id="10116"/>
    <lineage>
        <taxon>Eukaryota</taxon>
        <taxon>Metazoa</taxon>
        <taxon>Chordata</taxon>
        <taxon>Craniata</taxon>
        <taxon>Vertebrata</taxon>
        <taxon>Euteleostomi</taxon>
        <taxon>Mammalia</taxon>
        <taxon>Eutheria</taxon>
        <taxon>Euarchontoglires</taxon>
        <taxon>Glires</taxon>
        <taxon>Rodentia</taxon>
        <taxon>Myomorpha</taxon>
        <taxon>Muroidea</taxon>
        <taxon>Muridae</taxon>
        <taxon>Murinae</taxon>
        <taxon>Rattus</taxon>
    </lineage>
</organism>
<sequence length="168" mass="19013">MAAESLPFAFETVSSWELEAWYEDLQEVLSSDEIGGTYISSPGNEEEESKTFTTLDPASLAWLTEEPGPAEVTSTSQSPRSPDSSQSSMAQEEEEEDQGRTRKRKQSGQCAARAGKQRMKEKEQENERKVAQLAEENERLKLEIERLTREVETTRRALIDRMVSLHQA</sequence>